<evidence type="ECO:0000255" key="1">
    <source>
        <dbReference type="HAMAP-Rule" id="MF_01813"/>
    </source>
</evidence>
<keyword id="KW-0474">Menaquinone biosynthesis</keyword>
<keyword id="KW-0489">Methyltransferase</keyword>
<keyword id="KW-1185">Reference proteome</keyword>
<keyword id="KW-0949">S-adenosyl-L-methionine</keyword>
<keyword id="KW-0808">Transferase</keyword>
<keyword id="KW-0831">Ubiquinone biosynthesis</keyword>
<feature type="chain" id="PRO_1000070195" description="Ubiquinone/menaquinone biosynthesis C-methyltransferase UbiE">
    <location>
        <begin position="1"/>
        <end position="249"/>
    </location>
</feature>
<feature type="binding site" evidence="1">
    <location>
        <position position="74"/>
    </location>
    <ligand>
        <name>S-adenosyl-L-methionine</name>
        <dbReference type="ChEBI" id="CHEBI:59789"/>
    </ligand>
</feature>
<feature type="binding site" evidence="1">
    <location>
        <position position="93"/>
    </location>
    <ligand>
        <name>S-adenosyl-L-methionine</name>
        <dbReference type="ChEBI" id="CHEBI:59789"/>
    </ligand>
</feature>
<feature type="binding site" evidence="1">
    <location>
        <begin position="121"/>
        <end position="122"/>
    </location>
    <ligand>
        <name>S-adenosyl-L-methionine</name>
        <dbReference type="ChEBI" id="CHEBI:59789"/>
    </ligand>
</feature>
<gene>
    <name evidence="1" type="primary">ubiE</name>
    <name type="ordered locus">Acry_1724</name>
</gene>
<protein>
    <recommendedName>
        <fullName evidence="1">Ubiquinone/menaquinone biosynthesis C-methyltransferase UbiE</fullName>
        <ecNumber evidence="1">2.1.1.163</ecNumber>
        <ecNumber evidence="1">2.1.1.201</ecNumber>
    </recommendedName>
    <alternativeName>
        <fullName evidence="1">2-methoxy-6-polyprenyl-1,4-benzoquinol methylase</fullName>
    </alternativeName>
    <alternativeName>
        <fullName evidence="1">Demethylmenaquinone methyltransferase</fullName>
    </alternativeName>
</protein>
<accession>A5FZ96</accession>
<name>UBIE_ACICJ</name>
<reference key="1">
    <citation type="submission" date="2007-05" db="EMBL/GenBank/DDBJ databases">
        <title>Complete sequence of chromosome of Acidiphilium cryptum JF-5.</title>
        <authorList>
            <consortium name="US DOE Joint Genome Institute"/>
            <person name="Copeland A."/>
            <person name="Lucas S."/>
            <person name="Lapidus A."/>
            <person name="Barry K."/>
            <person name="Detter J.C."/>
            <person name="Glavina del Rio T."/>
            <person name="Hammon N."/>
            <person name="Israni S."/>
            <person name="Dalin E."/>
            <person name="Tice H."/>
            <person name="Pitluck S."/>
            <person name="Sims D."/>
            <person name="Brettin T."/>
            <person name="Bruce D."/>
            <person name="Han C."/>
            <person name="Schmutz J."/>
            <person name="Larimer F."/>
            <person name="Land M."/>
            <person name="Hauser L."/>
            <person name="Kyrpides N."/>
            <person name="Kim E."/>
            <person name="Magnuson T."/>
            <person name="Richardson P."/>
        </authorList>
    </citation>
    <scope>NUCLEOTIDE SEQUENCE [LARGE SCALE GENOMIC DNA]</scope>
    <source>
        <strain>JF-5</strain>
    </source>
</reference>
<organism>
    <name type="scientific">Acidiphilium cryptum (strain JF-5)</name>
    <dbReference type="NCBI Taxonomy" id="349163"/>
    <lineage>
        <taxon>Bacteria</taxon>
        <taxon>Pseudomonadati</taxon>
        <taxon>Pseudomonadota</taxon>
        <taxon>Alphaproteobacteria</taxon>
        <taxon>Acetobacterales</taxon>
        <taxon>Acidocellaceae</taxon>
        <taxon>Acidiphilium</taxon>
    </lineage>
</organism>
<comment type="function">
    <text evidence="1">Methyltransferase required for the conversion of demethylmenaquinol (DMKH2) to menaquinol (MKH2) and the conversion of 2-polyprenyl-6-methoxy-1,4-benzoquinol (DDMQH2) to 2-polyprenyl-3-methyl-6-methoxy-1,4-benzoquinol (DMQH2).</text>
</comment>
<comment type="catalytic activity">
    <reaction evidence="1">
        <text>a 2-demethylmenaquinol + S-adenosyl-L-methionine = a menaquinol + S-adenosyl-L-homocysteine + H(+)</text>
        <dbReference type="Rhea" id="RHEA:42640"/>
        <dbReference type="Rhea" id="RHEA-COMP:9539"/>
        <dbReference type="Rhea" id="RHEA-COMP:9563"/>
        <dbReference type="ChEBI" id="CHEBI:15378"/>
        <dbReference type="ChEBI" id="CHEBI:18151"/>
        <dbReference type="ChEBI" id="CHEBI:55437"/>
        <dbReference type="ChEBI" id="CHEBI:57856"/>
        <dbReference type="ChEBI" id="CHEBI:59789"/>
        <dbReference type="EC" id="2.1.1.163"/>
    </reaction>
</comment>
<comment type="catalytic activity">
    <reaction evidence="1">
        <text>a 2-methoxy-6-(all-trans-polyprenyl)benzene-1,4-diol + S-adenosyl-L-methionine = a 5-methoxy-2-methyl-3-(all-trans-polyprenyl)benzene-1,4-diol + S-adenosyl-L-homocysteine + H(+)</text>
        <dbReference type="Rhea" id="RHEA:28286"/>
        <dbReference type="Rhea" id="RHEA-COMP:10858"/>
        <dbReference type="Rhea" id="RHEA-COMP:10859"/>
        <dbReference type="ChEBI" id="CHEBI:15378"/>
        <dbReference type="ChEBI" id="CHEBI:57856"/>
        <dbReference type="ChEBI" id="CHEBI:59789"/>
        <dbReference type="ChEBI" id="CHEBI:84166"/>
        <dbReference type="ChEBI" id="CHEBI:84167"/>
        <dbReference type="EC" id="2.1.1.201"/>
    </reaction>
</comment>
<comment type="pathway">
    <text evidence="1">Quinol/quinone metabolism; menaquinone biosynthesis; menaquinol from 1,4-dihydroxy-2-naphthoate: step 2/2.</text>
</comment>
<comment type="pathway">
    <text evidence="1">Cofactor biosynthesis; ubiquinone biosynthesis.</text>
</comment>
<comment type="similarity">
    <text evidence="1">Belongs to the class I-like SAM-binding methyltransferase superfamily. MenG/UbiE family.</text>
</comment>
<dbReference type="EC" id="2.1.1.163" evidence="1"/>
<dbReference type="EC" id="2.1.1.201" evidence="1"/>
<dbReference type="EMBL" id="CP000697">
    <property type="protein sequence ID" value="ABQ30928.1"/>
    <property type="molecule type" value="Genomic_DNA"/>
</dbReference>
<dbReference type="RefSeq" id="WP_011942444.1">
    <property type="nucleotide sequence ID" value="NC_009484.1"/>
</dbReference>
<dbReference type="SMR" id="A5FZ96"/>
<dbReference type="STRING" id="349163.Acry_1724"/>
<dbReference type="KEGG" id="acr:Acry_1724"/>
<dbReference type="eggNOG" id="COG2226">
    <property type="taxonomic scope" value="Bacteria"/>
</dbReference>
<dbReference type="HOGENOM" id="CLU_037990_0_0_5"/>
<dbReference type="UniPathway" id="UPA00079">
    <property type="reaction ID" value="UER00169"/>
</dbReference>
<dbReference type="UniPathway" id="UPA00232"/>
<dbReference type="Proteomes" id="UP000000245">
    <property type="component" value="Chromosome"/>
</dbReference>
<dbReference type="GO" id="GO:0008425">
    <property type="term" value="F:2-methoxy-6-polyprenyl-1,4-benzoquinol methyltransferase activity"/>
    <property type="evidence" value="ECO:0007669"/>
    <property type="project" value="UniProtKB-UniRule"/>
</dbReference>
<dbReference type="GO" id="GO:0043770">
    <property type="term" value="F:demethylmenaquinone methyltransferase activity"/>
    <property type="evidence" value="ECO:0007669"/>
    <property type="project" value="UniProtKB-UniRule"/>
</dbReference>
<dbReference type="GO" id="GO:0009060">
    <property type="term" value="P:aerobic respiration"/>
    <property type="evidence" value="ECO:0007669"/>
    <property type="project" value="UniProtKB-UniRule"/>
</dbReference>
<dbReference type="GO" id="GO:0009234">
    <property type="term" value="P:menaquinone biosynthetic process"/>
    <property type="evidence" value="ECO:0007669"/>
    <property type="project" value="UniProtKB-UniRule"/>
</dbReference>
<dbReference type="GO" id="GO:0032259">
    <property type="term" value="P:methylation"/>
    <property type="evidence" value="ECO:0007669"/>
    <property type="project" value="UniProtKB-KW"/>
</dbReference>
<dbReference type="CDD" id="cd02440">
    <property type="entry name" value="AdoMet_MTases"/>
    <property type="match status" value="1"/>
</dbReference>
<dbReference type="Gene3D" id="3.40.50.150">
    <property type="entry name" value="Vaccinia Virus protein VP39"/>
    <property type="match status" value="1"/>
</dbReference>
<dbReference type="HAMAP" id="MF_01813">
    <property type="entry name" value="MenG_UbiE_methyltr"/>
    <property type="match status" value="1"/>
</dbReference>
<dbReference type="InterPro" id="IPR029063">
    <property type="entry name" value="SAM-dependent_MTases_sf"/>
</dbReference>
<dbReference type="InterPro" id="IPR004033">
    <property type="entry name" value="UbiE/COQ5_MeTrFase"/>
</dbReference>
<dbReference type="InterPro" id="IPR023576">
    <property type="entry name" value="UbiE/COQ5_MeTrFase_CS"/>
</dbReference>
<dbReference type="NCBIfam" id="TIGR01934">
    <property type="entry name" value="MenG_MenH_UbiE"/>
    <property type="match status" value="1"/>
</dbReference>
<dbReference type="PANTHER" id="PTHR43591:SF24">
    <property type="entry name" value="2-METHOXY-6-POLYPRENYL-1,4-BENZOQUINOL METHYLASE, MITOCHONDRIAL"/>
    <property type="match status" value="1"/>
</dbReference>
<dbReference type="PANTHER" id="PTHR43591">
    <property type="entry name" value="METHYLTRANSFERASE"/>
    <property type="match status" value="1"/>
</dbReference>
<dbReference type="Pfam" id="PF01209">
    <property type="entry name" value="Ubie_methyltran"/>
    <property type="match status" value="1"/>
</dbReference>
<dbReference type="SUPFAM" id="SSF53335">
    <property type="entry name" value="S-adenosyl-L-methionine-dependent methyltransferases"/>
    <property type="match status" value="1"/>
</dbReference>
<dbReference type="PROSITE" id="PS51608">
    <property type="entry name" value="SAM_MT_UBIE"/>
    <property type="match status" value="1"/>
</dbReference>
<dbReference type="PROSITE" id="PS01183">
    <property type="entry name" value="UBIE_1"/>
    <property type="match status" value="1"/>
</dbReference>
<dbReference type="PROSITE" id="PS01184">
    <property type="entry name" value="UBIE_2"/>
    <property type="match status" value="1"/>
</dbReference>
<proteinExistence type="inferred from homology"/>
<sequence length="249" mass="27756">MADTSSETVDFGFSTVPRGEKRHKVREVFDSVAGRYDIMNDLMSLGVHRLWKREFVAMMDPRPHRTLLDLAGGTGDISLRWLAAGGGPVLMTDINEAMLRVGRGRAEEQARIEGIGFAVADAEALPLRDSCVDRVSIAFGLRNCTDKDRVLAEARRVLKPGGRFFCLEFSRLQVAAAQPLYEKWSFVALPAIGARVAQDRESYQYLAESIRMFPDQETLAGMMRRAGFERVSYRNLSGGIAAIHSGWRL</sequence>